<keyword id="KW-0007">Acetylation</keyword>
<keyword id="KW-0479">Metal-binding</keyword>
<keyword id="KW-0687">Ribonucleoprotein</keyword>
<keyword id="KW-0689">Ribosomal protein</keyword>
<keyword id="KW-0694">RNA-binding</keyword>
<keyword id="KW-0699">rRNA-binding</keyword>
<keyword id="KW-0862">Zinc</keyword>
<gene>
    <name evidence="1" type="primary">rpmE</name>
    <name type="ordered locus">ECSE_4225</name>
</gene>
<feature type="chain" id="PRO_1000126621" description="Large ribosomal subunit protein bL31">
    <location>
        <begin position="1"/>
        <end position="70"/>
    </location>
</feature>
<feature type="binding site" evidence="1">
    <location>
        <position position="16"/>
    </location>
    <ligand>
        <name>Zn(2+)</name>
        <dbReference type="ChEBI" id="CHEBI:29105"/>
    </ligand>
</feature>
<feature type="binding site" evidence="1">
    <location>
        <position position="18"/>
    </location>
    <ligand>
        <name>Zn(2+)</name>
        <dbReference type="ChEBI" id="CHEBI:29105"/>
    </ligand>
</feature>
<feature type="binding site" evidence="1">
    <location>
        <position position="37"/>
    </location>
    <ligand>
        <name>Zn(2+)</name>
        <dbReference type="ChEBI" id="CHEBI:29105"/>
    </ligand>
</feature>
<feature type="binding site" evidence="1">
    <location>
        <position position="40"/>
    </location>
    <ligand>
        <name>Zn(2+)</name>
        <dbReference type="ChEBI" id="CHEBI:29105"/>
    </ligand>
</feature>
<feature type="modified residue" description="N6-acetyllysine" evidence="1">
    <location>
        <position position="8"/>
    </location>
</feature>
<reference key="1">
    <citation type="journal article" date="2008" name="DNA Res.">
        <title>Complete genome sequence and comparative analysis of the wild-type commensal Escherichia coli strain SE11 isolated from a healthy adult.</title>
        <authorList>
            <person name="Oshima K."/>
            <person name="Toh H."/>
            <person name="Ogura Y."/>
            <person name="Sasamoto H."/>
            <person name="Morita H."/>
            <person name="Park S.-H."/>
            <person name="Ooka T."/>
            <person name="Iyoda S."/>
            <person name="Taylor T.D."/>
            <person name="Hayashi T."/>
            <person name="Itoh K."/>
            <person name="Hattori M."/>
        </authorList>
    </citation>
    <scope>NUCLEOTIDE SEQUENCE [LARGE SCALE GENOMIC DNA]</scope>
    <source>
        <strain>SE11</strain>
    </source>
</reference>
<organism>
    <name type="scientific">Escherichia coli (strain SE11)</name>
    <dbReference type="NCBI Taxonomy" id="409438"/>
    <lineage>
        <taxon>Bacteria</taxon>
        <taxon>Pseudomonadati</taxon>
        <taxon>Pseudomonadota</taxon>
        <taxon>Gammaproteobacteria</taxon>
        <taxon>Enterobacterales</taxon>
        <taxon>Enterobacteriaceae</taxon>
        <taxon>Escherichia</taxon>
    </lineage>
</organism>
<accession>B6I4S9</accession>
<proteinExistence type="inferred from homology"/>
<dbReference type="EMBL" id="AP009240">
    <property type="protein sequence ID" value="BAG79749.1"/>
    <property type="molecule type" value="Genomic_DNA"/>
</dbReference>
<dbReference type="RefSeq" id="WP_000710769.1">
    <property type="nucleotide sequence ID" value="NC_011415.1"/>
</dbReference>
<dbReference type="SMR" id="B6I4S9"/>
<dbReference type="GeneID" id="93777962"/>
<dbReference type="KEGG" id="ecy:ECSE_4225"/>
<dbReference type="HOGENOM" id="CLU_114306_4_3_6"/>
<dbReference type="Proteomes" id="UP000008199">
    <property type="component" value="Chromosome"/>
</dbReference>
<dbReference type="GO" id="GO:1990904">
    <property type="term" value="C:ribonucleoprotein complex"/>
    <property type="evidence" value="ECO:0007669"/>
    <property type="project" value="UniProtKB-KW"/>
</dbReference>
<dbReference type="GO" id="GO:0005840">
    <property type="term" value="C:ribosome"/>
    <property type="evidence" value="ECO:0007669"/>
    <property type="project" value="UniProtKB-KW"/>
</dbReference>
<dbReference type="GO" id="GO:0046872">
    <property type="term" value="F:metal ion binding"/>
    <property type="evidence" value="ECO:0007669"/>
    <property type="project" value="UniProtKB-KW"/>
</dbReference>
<dbReference type="GO" id="GO:0019843">
    <property type="term" value="F:rRNA binding"/>
    <property type="evidence" value="ECO:0007669"/>
    <property type="project" value="UniProtKB-KW"/>
</dbReference>
<dbReference type="GO" id="GO:0003735">
    <property type="term" value="F:structural constituent of ribosome"/>
    <property type="evidence" value="ECO:0007669"/>
    <property type="project" value="InterPro"/>
</dbReference>
<dbReference type="GO" id="GO:0006412">
    <property type="term" value="P:translation"/>
    <property type="evidence" value="ECO:0007669"/>
    <property type="project" value="UniProtKB-UniRule"/>
</dbReference>
<dbReference type="FunFam" id="4.10.830.30:FF:000001">
    <property type="entry name" value="50S ribosomal protein L31"/>
    <property type="match status" value="1"/>
</dbReference>
<dbReference type="Gene3D" id="4.10.830.30">
    <property type="entry name" value="Ribosomal protein L31"/>
    <property type="match status" value="1"/>
</dbReference>
<dbReference type="HAMAP" id="MF_00501">
    <property type="entry name" value="Ribosomal_bL31_1"/>
    <property type="match status" value="1"/>
</dbReference>
<dbReference type="InterPro" id="IPR034704">
    <property type="entry name" value="Ribosomal_bL28/bL31-like_sf"/>
</dbReference>
<dbReference type="InterPro" id="IPR002150">
    <property type="entry name" value="Ribosomal_bL31"/>
</dbReference>
<dbReference type="InterPro" id="IPR027491">
    <property type="entry name" value="Ribosomal_bL31_A"/>
</dbReference>
<dbReference type="InterPro" id="IPR042105">
    <property type="entry name" value="Ribosomal_bL31_sf"/>
</dbReference>
<dbReference type="NCBIfam" id="TIGR00105">
    <property type="entry name" value="L31"/>
    <property type="match status" value="1"/>
</dbReference>
<dbReference type="NCBIfam" id="NF000612">
    <property type="entry name" value="PRK00019.1"/>
    <property type="match status" value="1"/>
</dbReference>
<dbReference type="NCBIfam" id="NF001809">
    <property type="entry name" value="PRK00528.1"/>
    <property type="match status" value="1"/>
</dbReference>
<dbReference type="PANTHER" id="PTHR33280">
    <property type="entry name" value="50S RIBOSOMAL PROTEIN L31, CHLOROPLASTIC"/>
    <property type="match status" value="1"/>
</dbReference>
<dbReference type="PANTHER" id="PTHR33280:SF6">
    <property type="entry name" value="LARGE RIBOSOMAL SUBUNIT PROTEIN BL31A"/>
    <property type="match status" value="1"/>
</dbReference>
<dbReference type="Pfam" id="PF01197">
    <property type="entry name" value="Ribosomal_L31"/>
    <property type="match status" value="1"/>
</dbReference>
<dbReference type="PRINTS" id="PR01249">
    <property type="entry name" value="RIBOSOMALL31"/>
</dbReference>
<dbReference type="SUPFAM" id="SSF143800">
    <property type="entry name" value="L28p-like"/>
    <property type="match status" value="1"/>
</dbReference>
<dbReference type="PROSITE" id="PS01143">
    <property type="entry name" value="RIBOSOMAL_L31"/>
    <property type="match status" value="1"/>
</dbReference>
<sequence length="70" mass="7871">MKKDIHPKYEEITASCSCGNVMKIRSTVGHDLNLDVCSKCHPFFTGKQRDVATGGRVDRFNKRFNIPGSK</sequence>
<protein>
    <recommendedName>
        <fullName evidence="1">Large ribosomal subunit protein bL31</fullName>
    </recommendedName>
    <alternativeName>
        <fullName evidence="2">50S ribosomal protein L31</fullName>
    </alternativeName>
</protein>
<comment type="function">
    <text evidence="1">Binds the 23S rRNA.</text>
</comment>
<comment type="cofactor">
    <cofactor evidence="1">
        <name>Zn(2+)</name>
        <dbReference type="ChEBI" id="CHEBI:29105"/>
    </cofactor>
    <text evidence="1">Binds 1 zinc ion per subunit.</text>
</comment>
<comment type="subunit">
    <text evidence="1">Part of the 50S ribosomal subunit.</text>
</comment>
<comment type="similarity">
    <text evidence="1">Belongs to the bacterial ribosomal protein bL31 family. Type A subfamily.</text>
</comment>
<name>RL31_ECOSE</name>
<evidence type="ECO:0000255" key="1">
    <source>
        <dbReference type="HAMAP-Rule" id="MF_00501"/>
    </source>
</evidence>
<evidence type="ECO:0000305" key="2"/>